<comment type="function">
    <text evidence="1">One of the primary rRNA binding proteins, it binds directly to 16S rRNA central domain where it helps coordinate assembly of the platform of the 30S subunit.</text>
</comment>
<comment type="subunit">
    <text evidence="1">Part of the 30S ribosomal subunit.</text>
</comment>
<comment type="subcellular location">
    <subcellularLocation>
        <location>Plastid</location>
        <location>Chloroplast</location>
    </subcellularLocation>
</comment>
<comment type="similarity">
    <text evidence="2">Belongs to the universal ribosomal protein uS8 family.</text>
</comment>
<keyword id="KW-0150">Chloroplast</keyword>
<keyword id="KW-0934">Plastid</keyword>
<keyword id="KW-0687">Ribonucleoprotein</keyword>
<keyword id="KW-0689">Ribosomal protein</keyword>
<keyword id="KW-0694">RNA-binding</keyword>
<keyword id="KW-0699">rRNA-binding</keyword>
<sequence length="136" mass="15882">MSKDTIANILTSIRNADMNKKRTVRIPYTNITENILKILLREGFIENMRKHQESNNLFFVLTLRHRRKRNRKGPDKTVLNLKRISRPGLRIYSNYQRIPRILGGMGIVILSTSRGIMTDREARLEGIGGEILCYIW</sequence>
<name>RR8_MORIN</name>
<proteinExistence type="inferred from homology"/>
<feature type="chain" id="PRO_0000276726" description="Small ribosomal subunit protein uS8c">
    <location>
        <begin position="1"/>
        <end position="136"/>
    </location>
</feature>
<protein>
    <recommendedName>
        <fullName evidence="2">Small ribosomal subunit protein uS8c</fullName>
    </recommendedName>
    <alternativeName>
        <fullName>30S ribosomal protein S8, chloroplastic</fullName>
    </alternativeName>
</protein>
<dbReference type="EMBL" id="DQ226511">
    <property type="protein sequence ID" value="ABB20992.1"/>
    <property type="molecule type" value="Genomic_DNA"/>
</dbReference>
<dbReference type="RefSeq" id="YP_762296.1">
    <property type="nucleotide sequence ID" value="NC_008359.1"/>
</dbReference>
<dbReference type="SMR" id="Q09WY2"/>
<dbReference type="GeneID" id="4290632"/>
<dbReference type="GO" id="GO:0009507">
    <property type="term" value="C:chloroplast"/>
    <property type="evidence" value="ECO:0007669"/>
    <property type="project" value="UniProtKB-SubCell"/>
</dbReference>
<dbReference type="GO" id="GO:1990904">
    <property type="term" value="C:ribonucleoprotein complex"/>
    <property type="evidence" value="ECO:0007669"/>
    <property type="project" value="UniProtKB-KW"/>
</dbReference>
<dbReference type="GO" id="GO:0005840">
    <property type="term" value="C:ribosome"/>
    <property type="evidence" value="ECO:0007669"/>
    <property type="project" value="UniProtKB-KW"/>
</dbReference>
<dbReference type="GO" id="GO:0019843">
    <property type="term" value="F:rRNA binding"/>
    <property type="evidence" value="ECO:0007669"/>
    <property type="project" value="UniProtKB-UniRule"/>
</dbReference>
<dbReference type="GO" id="GO:0003735">
    <property type="term" value="F:structural constituent of ribosome"/>
    <property type="evidence" value="ECO:0007669"/>
    <property type="project" value="InterPro"/>
</dbReference>
<dbReference type="GO" id="GO:0006412">
    <property type="term" value="P:translation"/>
    <property type="evidence" value="ECO:0007669"/>
    <property type="project" value="UniProtKB-UniRule"/>
</dbReference>
<dbReference type="FunFam" id="3.30.1490.10:FF:000001">
    <property type="entry name" value="30S ribosomal protein S8"/>
    <property type="match status" value="1"/>
</dbReference>
<dbReference type="FunFam" id="3.30.1370.30:FF:000004">
    <property type="entry name" value="30S ribosomal protein S8, chloroplastic"/>
    <property type="match status" value="1"/>
</dbReference>
<dbReference type="Gene3D" id="3.30.1370.30">
    <property type="match status" value="1"/>
</dbReference>
<dbReference type="Gene3D" id="3.30.1490.10">
    <property type="match status" value="1"/>
</dbReference>
<dbReference type="HAMAP" id="MF_01302_B">
    <property type="entry name" value="Ribosomal_uS8_B"/>
    <property type="match status" value="1"/>
</dbReference>
<dbReference type="InterPro" id="IPR000630">
    <property type="entry name" value="Ribosomal_uS8"/>
</dbReference>
<dbReference type="InterPro" id="IPR047863">
    <property type="entry name" value="Ribosomal_uS8_CS"/>
</dbReference>
<dbReference type="InterPro" id="IPR035987">
    <property type="entry name" value="Ribosomal_uS8_sf"/>
</dbReference>
<dbReference type="NCBIfam" id="NF001109">
    <property type="entry name" value="PRK00136.1"/>
    <property type="match status" value="1"/>
</dbReference>
<dbReference type="PANTHER" id="PTHR11758">
    <property type="entry name" value="40S RIBOSOMAL PROTEIN S15A"/>
    <property type="match status" value="1"/>
</dbReference>
<dbReference type="Pfam" id="PF00410">
    <property type="entry name" value="Ribosomal_S8"/>
    <property type="match status" value="1"/>
</dbReference>
<dbReference type="SUPFAM" id="SSF56047">
    <property type="entry name" value="Ribosomal protein S8"/>
    <property type="match status" value="1"/>
</dbReference>
<dbReference type="PROSITE" id="PS00053">
    <property type="entry name" value="RIBOSOMAL_S8"/>
    <property type="match status" value="1"/>
</dbReference>
<organism>
    <name type="scientific">Morus indica</name>
    <name type="common">Mulberry</name>
    <dbReference type="NCBI Taxonomy" id="248361"/>
    <lineage>
        <taxon>Eukaryota</taxon>
        <taxon>Viridiplantae</taxon>
        <taxon>Streptophyta</taxon>
        <taxon>Embryophyta</taxon>
        <taxon>Tracheophyta</taxon>
        <taxon>Spermatophyta</taxon>
        <taxon>Magnoliopsida</taxon>
        <taxon>eudicotyledons</taxon>
        <taxon>Gunneridae</taxon>
        <taxon>Pentapetalae</taxon>
        <taxon>rosids</taxon>
        <taxon>fabids</taxon>
        <taxon>Rosales</taxon>
        <taxon>Moraceae</taxon>
        <taxon>Moreae</taxon>
        <taxon>Morus</taxon>
    </lineage>
</organism>
<evidence type="ECO:0000250" key="1"/>
<evidence type="ECO:0000305" key="2"/>
<geneLocation type="chloroplast"/>
<accession>Q09WY2</accession>
<gene>
    <name type="primary">rps8</name>
    <name type="ordered locus">MoinCp056</name>
</gene>
<reference key="1">
    <citation type="submission" date="2005-09" db="EMBL/GenBank/DDBJ databases">
        <title>The chloroplast genome of mulberry: structural features and comparative analysis.</title>
        <authorList>
            <person name="Ravi V."/>
            <person name="Khurana J.P."/>
            <person name="Tyagi A.K."/>
            <person name="Khurana P."/>
        </authorList>
    </citation>
    <scope>NUCLEOTIDE SEQUENCE [LARGE SCALE GENOMIC DNA]</scope>
    <source>
        <strain>cv. K2</strain>
    </source>
</reference>